<proteinExistence type="inferred from homology"/>
<dbReference type="EMBL" id="CP000141">
    <property type="protein sequence ID" value="ABB15719.1"/>
    <property type="molecule type" value="Genomic_DNA"/>
</dbReference>
<dbReference type="RefSeq" id="WP_011344340.1">
    <property type="nucleotide sequence ID" value="NC_007503.1"/>
</dbReference>
<dbReference type="SMR" id="Q3AC69"/>
<dbReference type="FunCoup" id="Q3AC69">
    <property type="interactions" value="437"/>
</dbReference>
<dbReference type="STRING" id="246194.CHY_1433"/>
<dbReference type="KEGG" id="chy:CHY_1433"/>
<dbReference type="eggNOG" id="COG0228">
    <property type="taxonomic scope" value="Bacteria"/>
</dbReference>
<dbReference type="HOGENOM" id="CLU_100590_5_0_9"/>
<dbReference type="InParanoid" id="Q3AC69"/>
<dbReference type="OrthoDB" id="9807878at2"/>
<dbReference type="Proteomes" id="UP000002706">
    <property type="component" value="Chromosome"/>
</dbReference>
<dbReference type="GO" id="GO:0005737">
    <property type="term" value="C:cytoplasm"/>
    <property type="evidence" value="ECO:0007669"/>
    <property type="project" value="UniProtKB-ARBA"/>
</dbReference>
<dbReference type="GO" id="GO:0015935">
    <property type="term" value="C:small ribosomal subunit"/>
    <property type="evidence" value="ECO:0007669"/>
    <property type="project" value="TreeGrafter"/>
</dbReference>
<dbReference type="GO" id="GO:0003735">
    <property type="term" value="F:structural constituent of ribosome"/>
    <property type="evidence" value="ECO:0007669"/>
    <property type="project" value="InterPro"/>
</dbReference>
<dbReference type="GO" id="GO:0006412">
    <property type="term" value="P:translation"/>
    <property type="evidence" value="ECO:0007669"/>
    <property type="project" value="UniProtKB-UniRule"/>
</dbReference>
<dbReference type="Gene3D" id="3.30.1320.10">
    <property type="match status" value="1"/>
</dbReference>
<dbReference type="HAMAP" id="MF_00385">
    <property type="entry name" value="Ribosomal_bS16"/>
    <property type="match status" value="1"/>
</dbReference>
<dbReference type="InterPro" id="IPR000307">
    <property type="entry name" value="Ribosomal_bS16"/>
</dbReference>
<dbReference type="InterPro" id="IPR020592">
    <property type="entry name" value="Ribosomal_bS16_CS"/>
</dbReference>
<dbReference type="InterPro" id="IPR023803">
    <property type="entry name" value="Ribosomal_bS16_dom_sf"/>
</dbReference>
<dbReference type="NCBIfam" id="TIGR00002">
    <property type="entry name" value="S16"/>
    <property type="match status" value="1"/>
</dbReference>
<dbReference type="PANTHER" id="PTHR12919">
    <property type="entry name" value="30S RIBOSOMAL PROTEIN S16"/>
    <property type="match status" value="1"/>
</dbReference>
<dbReference type="PANTHER" id="PTHR12919:SF20">
    <property type="entry name" value="SMALL RIBOSOMAL SUBUNIT PROTEIN BS16M"/>
    <property type="match status" value="1"/>
</dbReference>
<dbReference type="Pfam" id="PF00886">
    <property type="entry name" value="Ribosomal_S16"/>
    <property type="match status" value="1"/>
</dbReference>
<dbReference type="SUPFAM" id="SSF54565">
    <property type="entry name" value="Ribosomal protein S16"/>
    <property type="match status" value="1"/>
</dbReference>
<dbReference type="PROSITE" id="PS00732">
    <property type="entry name" value="RIBOSOMAL_S16"/>
    <property type="match status" value="1"/>
</dbReference>
<protein>
    <recommendedName>
        <fullName evidence="1">Small ribosomal subunit protein bS16</fullName>
    </recommendedName>
    <alternativeName>
        <fullName evidence="2">30S ribosomal protein S16</fullName>
    </alternativeName>
</protein>
<evidence type="ECO:0000255" key="1">
    <source>
        <dbReference type="HAMAP-Rule" id="MF_00385"/>
    </source>
</evidence>
<evidence type="ECO:0000305" key="2"/>
<name>RS16_CARHZ</name>
<reference key="1">
    <citation type="journal article" date="2005" name="PLoS Genet.">
        <title>Life in hot carbon monoxide: the complete genome sequence of Carboxydothermus hydrogenoformans Z-2901.</title>
        <authorList>
            <person name="Wu M."/>
            <person name="Ren Q."/>
            <person name="Durkin A.S."/>
            <person name="Daugherty S.C."/>
            <person name="Brinkac L.M."/>
            <person name="Dodson R.J."/>
            <person name="Madupu R."/>
            <person name="Sullivan S.A."/>
            <person name="Kolonay J.F."/>
            <person name="Nelson W.C."/>
            <person name="Tallon L.J."/>
            <person name="Jones K.M."/>
            <person name="Ulrich L.E."/>
            <person name="Gonzalez J.M."/>
            <person name="Zhulin I.B."/>
            <person name="Robb F.T."/>
            <person name="Eisen J.A."/>
        </authorList>
    </citation>
    <scope>NUCLEOTIDE SEQUENCE [LARGE SCALE GENOMIC DNA]</scope>
    <source>
        <strain>ATCC BAA-161 / DSM 6008 / Z-2901</strain>
    </source>
</reference>
<gene>
    <name evidence="1" type="primary">rpsP</name>
    <name type="ordered locus">CHY_1433</name>
</gene>
<accession>Q3AC69</accession>
<keyword id="KW-1185">Reference proteome</keyword>
<keyword id="KW-0687">Ribonucleoprotein</keyword>
<keyword id="KW-0689">Ribosomal protein</keyword>
<organism>
    <name type="scientific">Carboxydothermus hydrogenoformans (strain ATCC BAA-161 / DSM 6008 / Z-2901)</name>
    <dbReference type="NCBI Taxonomy" id="246194"/>
    <lineage>
        <taxon>Bacteria</taxon>
        <taxon>Bacillati</taxon>
        <taxon>Bacillota</taxon>
        <taxon>Clostridia</taxon>
        <taxon>Thermoanaerobacterales</taxon>
        <taxon>Thermoanaerobacteraceae</taxon>
        <taxon>Carboxydothermus</taxon>
    </lineage>
</organism>
<feature type="chain" id="PRO_0000243791" description="Small ribosomal subunit protein bS16">
    <location>
        <begin position="1"/>
        <end position="86"/>
    </location>
</feature>
<sequence>MAVKIRLKRMGAKNNPFYRVVVADARSPRDGRVIDEIGYYDPVKQPAAVVINEEKALDWLKKGAQLTETARALFRKAGVLQKFQQK</sequence>
<comment type="similarity">
    <text evidence="1">Belongs to the bacterial ribosomal protein bS16 family.</text>
</comment>